<dbReference type="EC" id="2.7.7.41" evidence="2"/>
<dbReference type="EMBL" id="CP002685">
    <property type="protein sequence ID" value="AEC10515.1"/>
    <property type="molecule type" value="Genomic_DNA"/>
</dbReference>
<dbReference type="EMBL" id="CP002685">
    <property type="protein sequence ID" value="AEC10516.1"/>
    <property type="molecule type" value="Genomic_DNA"/>
</dbReference>
<dbReference type="EMBL" id="CP002685">
    <property type="protein sequence ID" value="AEC10517.1"/>
    <property type="molecule type" value="Genomic_DNA"/>
</dbReference>
<dbReference type="EMBL" id="AY050778">
    <property type="protein sequence ID" value="AAK92713.1"/>
    <property type="molecule type" value="mRNA"/>
</dbReference>
<dbReference type="EMBL" id="AK316876">
    <property type="protein sequence ID" value="BAH19584.1"/>
    <property type="molecule type" value="mRNA"/>
</dbReference>
<dbReference type="EMBL" id="BT026467">
    <property type="protein sequence ID" value="ABH04574.1"/>
    <property type="molecule type" value="mRNA"/>
</dbReference>
<dbReference type="EMBL" id="BX822071">
    <property type="status" value="NOT_ANNOTATED_CDS"/>
    <property type="molecule type" value="mRNA"/>
</dbReference>
<dbReference type="RefSeq" id="NP_566035.2">
    <molecule id="Q94A03-2"/>
    <property type="nucleotide sequence ID" value="NM_130078.4"/>
</dbReference>
<dbReference type="RefSeq" id="NP_973691.2">
    <molecule id="Q94A03-3"/>
    <property type="nucleotide sequence ID" value="NM_201962.2"/>
</dbReference>
<dbReference type="RefSeq" id="NP_973692.1">
    <molecule id="Q94A03-4"/>
    <property type="nucleotide sequence ID" value="NM_201963.2"/>
</dbReference>
<dbReference type="SMR" id="Q94A03"/>
<dbReference type="FunCoup" id="Q94A03">
    <property type="interactions" value="129"/>
</dbReference>
<dbReference type="STRING" id="3702.Q94A03"/>
<dbReference type="PaxDb" id="3702-AT2G45150.1"/>
<dbReference type="ProteomicsDB" id="223972">
    <molecule id="Q94A03-1"/>
</dbReference>
<dbReference type="EnsemblPlants" id="AT2G45150.1">
    <molecule id="Q94A03-2"/>
    <property type="protein sequence ID" value="AT2G45150.1"/>
    <property type="gene ID" value="AT2G45150"/>
</dbReference>
<dbReference type="EnsemblPlants" id="AT2G45150.2">
    <molecule id="Q94A03-3"/>
    <property type="protein sequence ID" value="AT2G45150.2"/>
    <property type="gene ID" value="AT2G45150"/>
</dbReference>
<dbReference type="EnsemblPlants" id="AT2G45150.3">
    <molecule id="Q94A03-4"/>
    <property type="protein sequence ID" value="AT2G45150.3"/>
    <property type="gene ID" value="AT2G45150"/>
</dbReference>
<dbReference type="GeneID" id="819123"/>
<dbReference type="Gramene" id="AT2G45150.1">
    <molecule id="Q94A03-2"/>
    <property type="protein sequence ID" value="AT2G45150.1"/>
    <property type="gene ID" value="AT2G45150"/>
</dbReference>
<dbReference type="Gramene" id="AT2G45150.2">
    <molecule id="Q94A03-3"/>
    <property type="protein sequence ID" value="AT2G45150.2"/>
    <property type="gene ID" value="AT2G45150"/>
</dbReference>
<dbReference type="Gramene" id="AT2G45150.3">
    <molecule id="Q94A03-4"/>
    <property type="protein sequence ID" value="AT2G45150.3"/>
    <property type="gene ID" value="AT2G45150"/>
</dbReference>
<dbReference type="KEGG" id="ath:AT2G45150"/>
<dbReference type="Araport" id="AT2G45150"/>
<dbReference type="TAIR" id="AT2G45150">
    <property type="gene designation" value="CDS4"/>
</dbReference>
<dbReference type="eggNOG" id="KOG1440">
    <property type="taxonomic scope" value="Eukaryota"/>
</dbReference>
<dbReference type="InParanoid" id="Q94A03"/>
<dbReference type="OMA" id="FRMAQFK"/>
<dbReference type="PhylomeDB" id="Q94A03"/>
<dbReference type="BRENDA" id="2.7.7.41">
    <property type="organism ID" value="399"/>
</dbReference>
<dbReference type="UniPathway" id="UPA00557">
    <property type="reaction ID" value="UER00614"/>
</dbReference>
<dbReference type="PRO" id="PR:Q94A03"/>
<dbReference type="Proteomes" id="UP000006548">
    <property type="component" value="Chromosome 2"/>
</dbReference>
<dbReference type="ExpressionAtlas" id="Q94A03">
    <property type="expression patterns" value="baseline and differential"/>
</dbReference>
<dbReference type="GO" id="GO:0031969">
    <property type="term" value="C:chloroplast membrane"/>
    <property type="evidence" value="ECO:0007669"/>
    <property type="project" value="UniProtKB-SubCell"/>
</dbReference>
<dbReference type="GO" id="GO:0009535">
    <property type="term" value="C:chloroplast thylakoid membrane"/>
    <property type="evidence" value="ECO:0000315"/>
    <property type="project" value="UniProtKB"/>
</dbReference>
<dbReference type="GO" id="GO:0009536">
    <property type="term" value="C:plastid"/>
    <property type="evidence" value="ECO:0000314"/>
    <property type="project" value="TAIR"/>
</dbReference>
<dbReference type="GO" id="GO:0004605">
    <property type="term" value="F:phosphatidate cytidylyltransferase activity"/>
    <property type="evidence" value="ECO:0000315"/>
    <property type="project" value="TAIR"/>
</dbReference>
<dbReference type="GO" id="GO:0016024">
    <property type="term" value="P:CDP-diacylglycerol biosynthetic process"/>
    <property type="evidence" value="ECO:0007669"/>
    <property type="project" value="UniProtKB-UniPathway"/>
</dbReference>
<dbReference type="GO" id="GO:0006655">
    <property type="term" value="P:phosphatidylglycerol biosynthetic process"/>
    <property type="evidence" value="ECO:0000315"/>
    <property type="project" value="UniProtKB"/>
</dbReference>
<dbReference type="InterPro" id="IPR000374">
    <property type="entry name" value="PC_trans"/>
</dbReference>
<dbReference type="PANTHER" id="PTHR47101:SF1">
    <property type="entry name" value="PHOSPHATIDATE CYTIDYLYLTRANSFERASE 4, CHLOROPLASTIC"/>
    <property type="match status" value="1"/>
</dbReference>
<dbReference type="PANTHER" id="PTHR47101">
    <property type="entry name" value="PHOSPHATIDATE CYTIDYLYLTRANSFERASE 5, CHLOROPLASTIC"/>
    <property type="match status" value="1"/>
</dbReference>
<dbReference type="Pfam" id="PF01148">
    <property type="entry name" value="CTP_transf_1"/>
    <property type="match status" value="1"/>
</dbReference>
<dbReference type="PROSITE" id="PS01315">
    <property type="entry name" value="CDS"/>
    <property type="match status" value="1"/>
</dbReference>
<comment type="function">
    <text evidence="2">May be involved in the synthesis of minor phospholipids and in modulation of IP3-mediated signal transduction. Promotes the biosynthesis of plastidial phosphatidylglycerol (PG) which is required for structure and function of thylakoid membranes and, hence, for photoautotrophic growth.</text>
</comment>
<comment type="catalytic activity">
    <reaction evidence="2">
        <text>a 1,2-diacyl-sn-glycero-3-phosphate + CTP + H(+) = a CDP-1,2-diacyl-sn-glycerol + diphosphate</text>
        <dbReference type="Rhea" id="RHEA:16229"/>
        <dbReference type="ChEBI" id="CHEBI:15378"/>
        <dbReference type="ChEBI" id="CHEBI:33019"/>
        <dbReference type="ChEBI" id="CHEBI:37563"/>
        <dbReference type="ChEBI" id="CHEBI:58332"/>
        <dbReference type="ChEBI" id="CHEBI:58608"/>
        <dbReference type="EC" id="2.7.7.41"/>
    </reaction>
</comment>
<comment type="cofactor">
    <cofactor evidence="2">
        <name>Mg(2+)</name>
        <dbReference type="ChEBI" id="CHEBI:18420"/>
    </cofactor>
    <text evidence="2">Requires a divalent cation for activity. Displays highest activities with MgCl(2).</text>
</comment>
<comment type="activity regulation">
    <text evidence="2">Highest activities is obtained at about 30 mM CTP and 2 mM phosphatidic acid (PA).</text>
</comment>
<comment type="biophysicochemical properties">
    <phDependence>
        <text evidence="2">Optimum pH is 7.5.</text>
    </phDependence>
</comment>
<comment type="pathway">
    <text evidence="2">Phospholipid metabolism; CDP-diacylglycerol biosynthesis; CDP-diacylglycerol from sn-glycerol 3-phosphate: step 3/3.</text>
</comment>
<comment type="subcellular location">
    <subcellularLocation>
        <location evidence="2">Plastid</location>
        <location evidence="2">Chloroplast membrane</location>
        <topology evidence="1">Multi-pass membrane protein</topology>
    </subcellularLocation>
</comment>
<comment type="alternative products">
    <event type="alternative splicing"/>
    <event type="alternative initiation"/>
    <isoform>
        <id>Q94A03-1</id>
        <name>1</name>
        <sequence type="displayed"/>
    </isoform>
    <isoform>
        <id>Q94A03-2</id>
        <name>2</name>
        <sequence type="described" ref="VSP_057443"/>
    </isoform>
    <isoform>
        <id>Q94A03-3</id>
        <name>3</name>
        <sequence type="described" ref="VSP_057443 VSP_057445 VSP_057446"/>
    </isoform>
    <isoform>
        <id>Q94A03-4</id>
        <name>4</name>
        <sequence type="described" ref="VSP_057444"/>
    </isoform>
</comment>
<comment type="disruption phenotype">
    <text evidence="2">When associated with the disruption of CDS5, requires sucrose (Suc) treatment to grow. Pale yellow-green leaves with reduced chlorophyll levels but an increased chlorophyll a/b ratio. Reduced plastidial phosphatidylglycerol (PG) biosynthesis leading to abnormal thylakoid membrane development.</text>
</comment>
<comment type="miscellaneous">
    <molecule>Isoform 2</molecule>
    <text evidence="7">Produced by alternative initiation.</text>
</comment>
<comment type="miscellaneous">
    <molecule>Isoform 3</molecule>
    <text evidence="8">Produced by a combination of alternative splicing and alternative initiation.</text>
</comment>
<comment type="miscellaneous">
    <molecule>Isoform 4</molecule>
    <text evidence="9">Produced by alternative splicing.</text>
</comment>
<comment type="similarity">
    <text evidence="4">Belongs to the CDS family.</text>
</comment>
<name>CDS4_ARATH</name>
<proteinExistence type="evidence at protein level"/>
<evidence type="ECO:0000255" key="1"/>
<evidence type="ECO:0000269" key="2">
    <source>
    </source>
</evidence>
<evidence type="ECO:0000303" key="3">
    <source>
    </source>
</evidence>
<evidence type="ECO:0000305" key="4"/>
<evidence type="ECO:0000312" key="5">
    <source>
        <dbReference type="Araport" id="AT2G45150"/>
    </source>
</evidence>
<evidence type="ECO:0000312" key="6">
    <source>
        <dbReference type="EMBL" id="AAK92713.1"/>
    </source>
</evidence>
<evidence type="ECO:0000312" key="7">
    <source>
        <dbReference type="EMBL" id="AEC10515.1"/>
    </source>
</evidence>
<evidence type="ECO:0000312" key="8">
    <source>
        <dbReference type="EMBL" id="AEC10516.1"/>
    </source>
</evidence>
<evidence type="ECO:0000312" key="9">
    <source>
        <dbReference type="EMBL" id="AEC10517.1"/>
    </source>
</evidence>
<feature type="transit peptide" description="Chloroplast" evidence="1">
    <location>
        <begin position="1"/>
        <end position="61"/>
    </location>
</feature>
<feature type="chain" id="PRO_0000431833" description="Phosphatidate cytidylyltransferase 4, chloroplastic" evidence="1">
    <location>
        <begin position="62"/>
        <end position="391"/>
    </location>
</feature>
<feature type="transmembrane region" description="Helical; Name=1" evidence="1">
    <location>
        <begin position="102"/>
        <end position="122"/>
    </location>
</feature>
<feature type="transmembrane region" description="Helical; Name=2" evidence="1">
    <location>
        <begin position="175"/>
        <end position="195"/>
    </location>
</feature>
<feature type="transmembrane region" description="Helical; Name=3" evidence="1">
    <location>
        <begin position="202"/>
        <end position="222"/>
    </location>
</feature>
<feature type="transmembrane region" description="Helical; Name=4" evidence="1">
    <location>
        <begin position="254"/>
        <end position="274"/>
    </location>
</feature>
<feature type="transmembrane region" description="Helical; Name=5" evidence="1">
    <location>
        <begin position="298"/>
        <end position="318"/>
    </location>
</feature>
<feature type="transmembrane region" description="Helical; Name=6" evidence="1">
    <location>
        <begin position="321"/>
        <end position="341"/>
    </location>
</feature>
<feature type="splice variant" id="VSP_057443" description="In isoform 2 and isoform 3.">
    <original>M</original>
    <variation>MTNTNTLFLRHDDDSEILIFQENSVFPLFVFASWGIWRAM</variation>
    <location>
        <position position="1"/>
    </location>
</feature>
<feature type="splice variant" id="VSP_057444" description="In isoform 4.">
    <location>
        <begin position="77"/>
        <end position="85"/>
    </location>
</feature>
<feature type="splice variant" id="VSP_057445" description="In isoform 3.">
    <original>TFGRTPLTS</original>
    <variation>VTPRMIPHR</variation>
    <location>
        <begin position="279"/>
        <end position="287"/>
    </location>
</feature>
<feature type="splice variant" id="VSP_057446" description="In isoform 3.">
    <location>
        <begin position="288"/>
        <end position="391"/>
    </location>
</feature>
<gene>
    <name evidence="3" type="primary">CDS4</name>
    <name evidence="5" type="ordered locus">At2g45150</name>
    <name type="ORF">T14P1.4</name>
</gene>
<sequence length="391" mass="42159">MATFAELVLSTSRCTCPCRSFTRKPLIRPPLSGLRLPGDTKPLFRSGLGRISVSRRFLTAVARAESDQLGDDDHSKGIDRIHNLQNVEDKQKKASQLKKRVIFGIGIGLPVGCVVLAGGWVFTVALASSVFIGSREYFELVRSRGIAKGMTPPPRYVSRVCSVICALMPILTLYFGNIDILVTSAAFVVAIALLVQRGSPRFAQLSSTMFGLFYCGYLPSFWVKLRCGLAAPALNTGIGRTWPILLGGQAHWTVGLVATLISFSGVIATDTFAFLGGKTFGRTPLTSISPKKTWEGTIVGLVGCIAITILLSKYLSWPQSLFSSVAFGFLNFFGSVFGDLTESMIKRDAGVKDSGSLIPGHGGILDRVDSYIFTGALAYSFIKTSLKLYGV</sequence>
<protein>
    <recommendedName>
        <fullName evidence="3">Phosphatidate cytidylyltransferase 4, chloroplastic</fullName>
        <ecNumber evidence="2">2.7.7.41</ecNumber>
    </recommendedName>
    <alternativeName>
        <fullName>CDP-DAG synthase 4</fullName>
    </alternativeName>
    <alternativeName>
        <fullName>CDP-DG synthase 4</fullName>
    </alternativeName>
    <alternativeName>
        <fullName>CDP-diacylglycerol synthase 4</fullName>
        <shortName>CDS4</shortName>
    </alternativeName>
    <alternativeName>
        <fullName>CDP-diglyceride pyrophosphorylase 4</fullName>
    </alternativeName>
    <alternativeName>
        <fullName>CDP-diglyceride synthase 4</fullName>
    </alternativeName>
    <alternativeName>
        <fullName>CTP:phosphatidate cytidylyltransferase 4</fullName>
    </alternativeName>
</protein>
<organism evidence="6">
    <name type="scientific">Arabidopsis thaliana</name>
    <name type="common">Mouse-ear cress</name>
    <dbReference type="NCBI Taxonomy" id="3702"/>
    <lineage>
        <taxon>Eukaryota</taxon>
        <taxon>Viridiplantae</taxon>
        <taxon>Streptophyta</taxon>
        <taxon>Embryophyta</taxon>
        <taxon>Tracheophyta</taxon>
        <taxon>Spermatophyta</taxon>
        <taxon>Magnoliopsida</taxon>
        <taxon>eudicotyledons</taxon>
        <taxon>Gunneridae</taxon>
        <taxon>Pentapetalae</taxon>
        <taxon>rosids</taxon>
        <taxon>malvids</taxon>
        <taxon>Brassicales</taxon>
        <taxon>Brassicaceae</taxon>
        <taxon>Camelineae</taxon>
        <taxon>Arabidopsis</taxon>
    </lineage>
</organism>
<keyword id="KW-0024">Alternative initiation</keyword>
<keyword id="KW-0025">Alternative splicing</keyword>
<keyword id="KW-0150">Chloroplast</keyword>
<keyword id="KW-0444">Lipid biosynthesis</keyword>
<keyword id="KW-0443">Lipid metabolism</keyword>
<keyword id="KW-0460">Magnesium</keyword>
<keyword id="KW-0472">Membrane</keyword>
<keyword id="KW-0548">Nucleotidyltransferase</keyword>
<keyword id="KW-0594">Phospholipid biosynthesis</keyword>
<keyword id="KW-1208">Phospholipid metabolism</keyword>
<keyword id="KW-0934">Plastid</keyword>
<keyword id="KW-1185">Reference proteome</keyword>
<keyword id="KW-0808">Transferase</keyword>
<keyword id="KW-0809">Transit peptide</keyword>
<keyword id="KW-0812">Transmembrane</keyword>
<keyword id="KW-1133">Transmembrane helix</keyword>
<accession>Q94A03</accession>
<accession>F4IW27</accession>
<accession>F4IW28</accession>
<accession>Q0V7V3</accession>
<reference key="1">
    <citation type="journal article" date="1999" name="Nature">
        <title>Sequence and analysis of chromosome 2 of the plant Arabidopsis thaliana.</title>
        <authorList>
            <person name="Lin X."/>
            <person name="Kaul S."/>
            <person name="Rounsley S.D."/>
            <person name="Shea T.P."/>
            <person name="Benito M.-I."/>
            <person name="Town C.D."/>
            <person name="Fujii C.Y."/>
            <person name="Mason T.M."/>
            <person name="Bowman C.L."/>
            <person name="Barnstead M.E."/>
            <person name="Feldblyum T.V."/>
            <person name="Buell C.R."/>
            <person name="Ketchum K.A."/>
            <person name="Lee J.J."/>
            <person name="Ronning C.M."/>
            <person name="Koo H.L."/>
            <person name="Moffat K.S."/>
            <person name="Cronin L.A."/>
            <person name="Shen M."/>
            <person name="Pai G."/>
            <person name="Van Aken S."/>
            <person name="Umayam L."/>
            <person name="Tallon L.J."/>
            <person name="Gill J.E."/>
            <person name="Adams M.D."/>
            <person name="Carrera A.J."/>
            <person name="Creasy T.H."/>
            <person name="Goodman H.M."/>
            <person name="Somerville C.R."/>
            <person name="Copenhaver G.P."/>
            <person name="Preuss D."/>
            <person name="Nierman W.C."/>
            <person name="White O."/>
            <person name="Eisen J.A."/>
            <person name="Salzberg S.L."/>
            <person name="Fraser C.M."/>
            <person name="Venter J.C."/>
        </authorList>
    </citation>
    <scope>NUCLEOTIDE SEQUENCE [LARGE SCALE GENOMIC DNA]</scope>
    <source>
        <strain>cv. Columbia</strain>
    </source>
</reference>
<reference key="2">
    <citation type="journal article" date="2017" name="Plant J.">
        <title>Araport11: a complete reannotation of the Arabidopsis thaliana reference genome.</title>
        <authorList>
            <person name="Cheng C.Y."/>
            <person name="Krishnakumar V."/>
            <person name="Chan A.P."/>
            <person name="Thibaud-Nissen F."/>
            <person name="Schobel S."/>
            <person name="Town C.D."/>
        </authorList>
    </citation>
    <scope>GENOME REANNOTATION</scope>
    <source>
        <strain>cv. Columbia</strain>
    </source>
</reference>
<reference key="3">
    <citation type="journal article" date="2003" name="Science">
        <title>Empirical analysis of transcriptional activity in the Arabidopsis genome.</title>
        <authorList>
            <person name="Yamada K."/>
            <person name="Lim J."/>
            <person name="Dale J.M."/>
            <person name="Chen H."/>
            <person name="Shinn P."/>
            <person name="Palm C.J."/>
            <person name="Southwick A.M."/>
            <person name="Wu H.C."/>
            <person name="Kim C.J."/>
            <person name="Nguyen M."/>
            <person name="Pham P.K."/>
            <person name="Cheuk R.F."/>
            <person name="Karlin-Newmann G."/>
            <person name="Liu S.X."/>
            <person name="Lam B."/>
            <person name="Sakano H."/>
            <person name="Wu T."/>
            <person name="Yu G."/>
            <person name="Miranda M."/>
            <person name="Quach H.L."/>
            <person name="Tripp M."/>
            <person name="Chang C.H."/>
            <person name="Lee J.M."/>
            <person name="Toriumi M.J."/>
            <person name="Chan M.M."/>
            <person name="Tang C.C."/>
            <person name="Onodera C.S."/>
            <person name="Deng J.M."/>
            <person name="Akiyama K."/>
            <person name="Ansari Y."/>
            <person name="Arakawa T."/>
            <person name="Banh J."/>
            <person name="Banno F."/>
            <person name="Bowser L."/>
            <person name="Brooks S.Y."/>
            <person name="Carninci P."/>
            <person name="Chao Q."/>
            <person name="Choy N."/>
            <person name="Enju A."/>
            <person name="Goldsmith A.D."/>
            <person name="Gurjal M."/>
            <person name="Hansen N.F."/>
            <person name="Hayashizaki Y."/>
            <person name="Johnson-Hopson C."/>
            <person name="Hsuan V.W."/>
            <person name="Iida K."/>
            <person name="Karnes M."/>
            <person name="Khan S."/>
            <person name="Koesema E."/>
            <person name="Ishida J."/>
            <person name="Jiang P.X."/>
            <person name="Jones T."/>
            <person name="Kawai J."/>
            <person name="Kamiya A."/>
            <person name="Meyers C."/>
            <person name="Nakajima M."/>
            <person name="Narusaka M."/>
            <person name="Seki M."/>
            <person name="Sakurai T."/>
            <person name="Satou M."/>
            <person name="Tamse R."/>
            <person name="Vaysberg M."/>
            <person name="Wallender E.K."/>
            <person name="Wong C."/>
            <person name="Yamamura Y."/>
            <person name="Yuan S."/>
            <person name="Shinozaki K."/>
            <person name="Davis R.W."/>
            <person name="Theologis A."/>
            <person name="Ecker J.R."/>
        </authorList>
    </citation>
    <scope>NUCLEOTIDE SEQUENCE [LARGE SCALE MRNA] (ISOFORM 1)</scope>
    <source>
        <strain>cv. Columbia</strain>
    </source>
</reference>
<reference key="4">
    <citation type="journal article" date="2009" name="DNA Res.">
        <title>Analysis of multiple occurrences of alternative splicing events in Arabidopsis thaliana using novel sequenced full-length cDNAs.</title>
        <authorList>
            <person name="Iida K."/>
            <person name="Fukami-Kobayashi K."/>
            <person name="Toyoda A."/>
            <person name="Sakaki Y."/>
            <person name="Kobayashi M."/>
            <person name="Seki M."/>
            <person name="Shinozaki K."/>
        </authorList>
    </citation>
    <scope>NUCLEOTIDE SEQUENCE [LARGE SCALE MRNA] (ISOFORM 4)</scope>
    <source>
        <strain>cv. Columbia</strain>
    </source>
</reference>
<reference key="5">
    <citation type="submission" date="2006-08" db="EMBL/GenBank/DDBJ databases">
        <title>Arabidopsis ORF Clones.</title>
        <authorList>
            <person name="Quinitio C."/>
            <person name="Chen H."/>
            <person name="Kim C.J."/>
            <person name="Shinn P."/>
            <person name="Ecker J.R."/>
        </authorList>
    </citation>
    <scope>NUCLEOTIDE SEQUENCE [LARGE SCALE MRNA] (ISOFORM 4)</scope>
    <source>
        <strain>cv. Columbia</strain>
    </source>
</reference>
<reference key="6">
    <citation type="journal article" date="2004" name="Genome Res.">
        <title>Whole genome sequence comparisons and 'full-length' cDNA sequences: a combined approach to evaluate and improve Arabidopsis genome annotation.</title>
        <authorList>
            <person name="Castelli V."/>
            <person name="Aury J.-M."/>
            <person name="Jaillon O."/>
            <person name="Wincker P."/>
            <person name="Clepet C."/>
            <person name="Menard M."/>
            <person name="Cruaud C."/>
            <person name="Quetier F."/>
            <person name="Scarpelli C."/>
            <person name="Schaechter V."/>
            <person name="Temple G."/>
            <person name="Caboche M."/>
            <person name="Weissenbach J."/>
            <person name="Salanoubat M."/>
        </authorList>
    </citation>
    <scope>PARTIAL NUCLEOTIDE SEQUENCE [LARGE SCALE MRNA] (ISOFORM 3)</scope>
    <source>
        <strain>cv. Columbia</strain>
    </source>
</reference>
<reference key="7">
    <citation type="journal article" date="2010" name="Plant Physiol.">
        <title>Two closely related genes of Arabidopsis encode plastidial cytidinediphosphate diacylglycerol synthases essential for photoautotrophic growth.</title>
        <authorList>
            <person name="Haselier A."/>
            <person name="Akbari H."/>
            <person name="Weth A."/>
            <person name="Baumgartner W."/>
            <person name="Frentzen M."/>
        </authorList>
    </citation>
    <scope>FUNCTION</scope>
    <scope>DISRUPTION PHENOTYPE</scope>
    <scope>ACTIVITY REGULATION</scope>
    <scope>BIOPHYSICOCHEMICAL PROPERTIES</scope>
    <scope>COFACTOR</scope>
    <scope>CATALYTIC ACTIVITY</scope>
    <scope>PATHWAY</scope>
    <scope>SUBCELLULAR LOCATION</scope>
    <scope>GENE FAMILY</scope>
    <scope>NOMENCLATURE</scope>
</reference>